<organism>
    <name type="scientific">Mycolicibacterium smegmatis</name>
    <name type="common">Mycobacterium smegmatis</name>
    <dbReference type="NCBI Taxonomy" id="1772"/>
    <lineage>
        <taxon>Bacteria</taxon>
        <taxon>Bacillati</taxon>
        <taxon>Actinomycetota</taxon>
        <taxon>Actinomycetes</taxon>
        <taxon>Mycobacteriales</taxon>
        <taxon>Mycobacteriaceae</taxon>
        <taxon>Mycolicibacterium</taxon>
    </lineage>
</organism>
<evidence type="ECO:0000250" key="1"/>
<evidence type="ECO:0000255" key="2">
    <source>
        <dbReference type="PROSITE-ProRule" id="PRU00408"/>
    </source>
</evidence>
<evidence type="ECO:0000305" key="3"/>
<gene>
    <name type="primary">rnhA</name>
</gene>
<comment type="function">
    <text evidence="1">Endonuclease that specifically degrades the RNA of RNA-DNA hybrids.</text>
</comment>
<comment type="catalytic activity">
    <reaction>
        <text>Endonucleolytic cleavage to 5'-phosphomonoester.</text>
        <dbReference type="EC" id="3.1.26.4"/>
    </reaction>
</comment>
<comment type="cofactor">
    <cofactor evidence="1">
        <name>Mg(2+)</name>
        <dbReference type="ChEBI" id="CHEBI:18420"/>
    </cofactor>
    <text evidence="1">Binds 1 Mg(2+) ion per subunit. May bind a second metal ion at a regulatory site, or after substrate binding.</text>
</comment>
<comment type="subunit">
    <text evidence="1">Monomer.</text>
</comment>
<comment type="subcellular location">
    <subcellularLocation>
        <location evidence="3">Cytoplasm</location>
    </subcellularLocation>
</comment>
<comment type="similarity">
    <text evidence="3">Belongs to the RNase H family.</text>
</comment>
<reference key="1">
    <citation type="submission" date="1995-01" db="EMBL/GenBank/DDBJ databases">
        <authorList>
            <person name="Dawes S.S."/>
            <person name="Crouch R.J."/>
            <person name="Morris S.L."/>
            <person name="Mizrahi V."/>
        </authorList>
    </citation>
    <scope>NUCLEOTIDE SEQUENCE [GENOMIC DNA]</scope>
    <source>
        <strain>LR222</strain>
    </source>
</reference>
<reference key="2">
    <citation type="journal article" date="1993" name="Gene">
        <title>A PCR method for the sequence analysis of the gyrA, polA and rnhA gene segments from mycobacteria.</title>
        <authorList>
            <person name="Mizrahi V."/>
            <person name="Huberts P."/>
            <person name="Dawes S.S."/>
            <person name="Dudding L.R."/>
        </authorList>
    </citation>
    <scope>NUCLEOTIDE SEQUENCE [GENOMIC DNA] OF 44-110</scope>
    <source>
        <strain>LR222</strain>
    </source>
</reference>
<dbReference type="EC" id="3.1.26.4"/>
<dbReference type="EMBL" id="U20115">
    <property type="protein sequence ID" value="AAA62124.1"/>
    <property type="molecule type" value="Genomic_DNA"/>
</dbReference>
<dbReference type="RefSeq" id="WP_003896965.1">
    <property type="nucleotide sequence ID" value="NZ_UGQO01000001.1"/>
</dbReference>
<dbReference type="SMR" id="Q07705"/>
<dbReference type="GeneID" id="93460207"/>
<dbReference type="KEGG" id="msh:LI98_27505"/>
<dbReference type="KEGG" id="msn:LI99_27500"/>
<dbReference type="OMA" id="MQEIEIF"/>
<dbReference type="GO" id="GO:0005737">
    <property type="term" value="C:cytoplasm"/>
    <property type="evidence" value="ECO:0007669"/>
    <property type="project" value="UniProtKB-SubCell"/>
</dbReference>
<dbReference type="GO" id="GO:0000287">
    <property type="term" value="F:magnesium ion binding"/>
    <property type="evidence" value="ECO:0007669"/>
    <property type="project" value="UniProtKB-UniRule"/>
</dbReference>
<dbReference type="GO" id="GO:0003676">
    <property type="term" value="F:nucleic acid binding"/>
    <property type="evidence" value="ECO:0007669"/>
    <property type="project" value="InterPro"/>
</dbReference>
<dbReference type="GO" id="GO:0004523">
    <property type="term" value="F:RNA-DNA hybrid ribonuclease activity"/>
    <property type="evidence" value="ECO:0007669"/>
    <property type="project" value="UniProtKB-UniRule"/>
</dbReference>
<dbReference type="GO" id="GO:0043137">
    <property type="term" value="P:DNA replication, removal of RNA primer"/>
    <property type="evidence" value="ECO:0007669"/>
    <property type="project" value="TreeGrafter"/>
</dbReference>
<dbReference type="CDD" id="cd09278">
    <property type="entry name" value="RNase_HI_prokaryote_like"/>
    <property type="match status" value="1"/>
</dbReference>
<dbReference type="FunFam" id="3.30.420.10:FF:000089">
    <property type="entry name" value="Ribonuclease H"/>
    <property type="match status" value="1"/>
</dbReference>
<dbReference type="Gene3D" id="3.30.420.10">
    <property type="entry name" value="Ribonuclease H-like superfamily/Ribonuclease H"/>
    <property type="match status" value="1"/>
</dbReference>
<dbReference type="HAMAP" id="MF_00042">
    <property type="entry name" value="RNase_H"/>
    <property type="match status" value="1"/>
</dbReference>
<dbReference type="InterPro" id="IPR050092">
    <property type="entry name" value="RNase_H"/>
</dbReference>
<dbReference type="InterPro" id="IPR012337">
    <property type="entry name" value="RNaseH-like_sf"/>
</dbReference>
<dbReference type="InterPro" id="IPR002156">
    <property type="entry name" value="RNaseH_domain"/>
</dbReference>
<dbReference type="InterPro" id="IPR036397">
    <property type="entry name" value="RNaseH_sf"/>
</dbReference>
<dbReference type="InterPro" id="IPR022892">
    <property type="entry name" value="RNaseHI"/>
</dbReference>
<dbReference type="NCBIfam" id="NF001236">
    <property type="entry name" value="PRK00203.1"/>
    <property type="match status" value="1"/>
</dbReference>
<dbReference type="PANTHER" id="PTHR10642">
    <property type="entry name" value="RIBONUCLEASE H1"/>
    <property type="match status" value="1"/>
</dbReference>
<dbReference type="PANTHER" id="PTHR10642:SF26">
    <property type="entry name" value="RIBONUCLEASE H1"/>
    <property type="match status" value="1"/>
</dbReference>
<dbReference type="Pfam" id="PF00075">
    <property type="entry name" value="RNase_H"/>
    <property type="match status" value="1"/>
</dbReference>
<dbReference type="SUPFAM" id="SSF53098">
    <property type="entry name" value="Ribonuclease H-like"/>
    <property type="match status" value="1"/>
</dbReference>
<dbReference type="PROSITE" id="PS50879">
    <property type="entry name" value="RNASE_H_1"/>
    <property type="match status" value="1"/>
</dbReference>
<accession>Q07705</accession>
<keyword id="KW-0963">Cytoplasm</keyword>
<keyword id="KW-0255">Endonuclease</keyword>
<keyword id="KW-0378">Hydrolase</keyword>
<keyword id="KW-0460">Magnesium</keyword>
<keyword id="KW-0479">Metal-binding</keyword>
<keyword id="KW-0540">Nuclease</keyword>
<name>RNH_MYCSM</name>
<protein>
    <recommendedName>
        <fullName>Ribonuclease H</fullName>
        <shortName>RNase H</shortName>
        <ecNumber>3.1.26.4</ecNumber>
    </recommendedName>
</protein>
<proteinExistence type="inferred from homology"/>
<feature type="chain" id="PRO_0000195382" description="Ribonuclease H">
    <location>
        <begin position="1"/>
        <end position="159"/>
    </location>
</feature>
<feature type="domain" description="RNase H type-1" evidence="2">
    <location>
        <begin position="2"/>
        <end position="144"/>
    </location>
</feature>
<feature type="binding site" evidence="1">
    <location>
        <position position="11"/>
    </location>
    <ligand>
        <name>Mg(2+)</name>
        <dbReference type="ChEBI" id="CHEBI:18420"/>
        <label>1</label>
    </ligand>
</feature>
<feature type="binding site" evidence="1">
    <location>
        <position position="11"/>
    </location>
    <ligand>
        <name>Mg(2+)</name>
        <dbReference type="ChEBI" id="CHEBI:18420"/>
        <label>2</label>
    </ligand>
</feature>
<feature type="binding site" evidence="1">
    <location>
        <position position="50"/>
    </location>
    <ligand>
        <name>Mg(2+)</name>
        <dbReference type="ChEBI" id="CHEBI:18420"/>
        <label>1</label>
    </ligand>
</feature>
<feature type="binding site" evidence="1">
    <location>
        <position position="72"/>
    </location>
    <ligand>
        <name>Mg(2+)</name>
        <dbReference type="ChEBI" id="CHEBI:18420"/>
        <label>1</label>
    </ligand>
</feature>
<feature type="binding site" evidence="1">
    <location>
        <position position="136"/>
    </location>
    <ligand>
        <name>Mg(2+)</name>
        <dbReference type="ChEBI" id="CHEBI:18420"/>
        <label>2</label>
    </ligand>
</feature>
<feature type="sequence conflict" description="In Ref. 2." evidence="3" ref="2">
    <original>S</original>
    <variation>T</variation>
    <location>
        <position position="45"/>
    </location>
</feature>
<feature type="sequence conflict" description="In Ref. 2." evidence="3" ref="2">
    <original>M</original>
    <variation>L</variation>
    <location>
        <position position="49"/>
    </location>
</feature>
<sequence length="159" mass="17529">MSQDPVIIHTDGGCRPNPGPGGWGAVLRHREHVREMFGGEAAVTSNNRMELTAPIMALEALTRPVTVHLYTDSTYVRNGITKWVLGWERNGWMTAAKQPVKNVDLWQRLQAACARHQVEWFWVKGHSGIGDNELADELATRGLQEAVGLTTSSAGTSLR</sequence>